<protein>
    <recommendedName>
        <fullName>Insulin-degrading enzyme-like 2</fullName>
        <ecNumber>3.4.24.-</ecNumber>
    </recommendedName>
    <alternativeName>
        <fullName>Insulysin-like 2</fullName>
    </alternativeName>
</protein>
<keyword id="KW-0025">Alternative splicing</keyword>
<keyword id="KW-0378">Hydrolase</keyword>
<keyword id="KW-0479">Metal-binding</keyword>
<keyword id="KW-0482">Metalloprotease</keyword>
<keyword id="KW-0645">Protease</keyword>
<keyword id="KW-1185">Reference proteome</keyword>
<keyword id="KW-0862">Zinc</keyword>
<accession>F4J3D9</accession>
<accession>B6EUA3</accession>
<accession>Q9SCM5</accession>
<evidence type="ECO:0000250" key="1"/>
<evidence type="ECO:0000255" key="2">
    <source>
        <dbReference type="PROSITE-ProRule" id="PRU10096"/>
    </source>
</evidence>
<evidence type="ECO:0000305" key="3"/>
<evidence type="ECO:0000312" key="4">
    <source>
        <dbReference type="Araport" id="AT3G57470"/>
    </source>
</evidence>
<evidence type="ECO:0000312" key="5">
    <source>
        <dbReference type="EMBL" id="CAB66104.1"/>
    </source>
</evidence>
<sequence length="966" mass="110688">MAVGMENATASGECGEILKPRTDKREYRRIVLKNSLEVLLISDPETDKCAASMNVSVGSFTDPEGLEGLAHFLEHMLFYASEKYPEEDSYSKYITEHGGSTNAYTSSEDTNYHFDINTDSFYEALDRFAQFFIQPLMSTDATMREIKAVDSEHQNNLLSDSWRMAQLQKHLSREDHPYHKFSTGNMDTLHVRPEENGVDTRSELIKFYDEHYSANIMHLVVYGKENLDKTQGLVEALFQGIRNTNQGIPRFPGQPCTLDHLQVLVKAVPIMQGHELSVSWPVTPSISHYEEAPCRYLGDLIGHEGEGSLFHALKILGWATGLYAGEADWSMEYSFFNVSIDLTDAGHEHMQDILGLLFEYIKVLQQSGVSQWIFDELSAICEAEFHYQAKIDPISYAVDISSNMKIYPTKHWLVGSSLPSKFNPAIVQKVLDELSPNNVRIFWESNKFEGQTDKVEPWYNTAYSLEKITKFTIQEWMQSAPDVNLLLPTPNVFIPTDFSLKDLKDKDIFPVLLRKTSYSRLWYKPDTKFFKPKAYVKMDFNCPLAVSSPDAAVLSDIFVWLLVDYLNEYAYYAQAAGLDYGLSLSDNGFELSLAGFNHKLRILLEAVIQKIAKFEVKPDRFSVIKETVTKAYQNNKFQQPHEQATNYCSLVLQDQIWPWTEELDALSHLEAEDLANFVPMLLSRTFVECYIAGNVEKDEAESMVKHIEDVLFTDSKPICRPLFPSQFLTNRVTELGTGMKHFYYQEGSNSSDENSALVHYIQVHKDEFSMNSKLQLFELIAKQDTFHQLRTIEQLGYITSLSLSNDSGVYGVQFIIQSSVKGPGHIDSRVESLLKDLESKFYNMSDEEFKSNVTNLIDMKLEKDKNLDEESWFYWAEIQTGTLKFNRIDAEVAALRLLKKDEWIDFFDEYIKVDAPNKKSLSICVYGNQHLKEMRNDKDKIPSTSIEIEDIVCFRKSQPLYGSLKL</sequence>
<gene>
    <name evidence="4" type="ordered locus">At3g57470</name>
    <name evidence="5" type="ORF">T8H10.70</name>
</gene>
<feature type="chain" id="PRO_0000435732" description="Insulin-degrading enzyme-like 2">
    <location>
        <begin position="1"/>
        <end position="966"/>
    </location>
</feature>
<feature type="active site" description="Proton acceptor" evidence="2">
    <location>
        <position position="74"/>
    </location>
</feature>
<feature type="active site" evidence="3">
    <location>
        <position position="145"/>
    </location>
</feature>
<feature type="binding site" evidence="2">
    <location>
        <position position="71"/>
    </location>
    <ligand>
        <name>Zn(2+)</name>
        <dbReference type="ChEBI" id="CHEBI:29105"/>
    </ligand>
</feature>
<feature type="binding site" evidence="2">
    <location>
        <position position="75"/>
    </location>
    <ligand>
        <name>Zn(2+)</name>
        <dbReference type="ChEBI" id="CHEBI:29105"/>
    </ligand>
</feature>
<feature type="binding site" evidence="3">
    <location>
        <position position="152"/>
    </location>
    <ligand>
        <name>Zn(2+)</name>
        <dbReference type="ChEBI" id="CHEBI:29105"/>
    </ligand>
</feature>
<dbReference type="EC" id="3.4.24.-"/>
<dbReference type="EMBL" id="AL133248">
    <property type="protein sequence ID" value="CAB66104.1"/>
    <property type="status" value="ALT_SEQ"/>
    <property type="molecule type" value="Genomic_DNA"/>
</dbReference>
<dbReference type="EMBL" id="CP002686">
    <property type="protein sequence ID" value="AEE79658.1"/>
    <property type="status" value="ALT_SEQ"/>
    <property type="molecule type" value="Genomic_DNA"/>
</dbReference>
<dbReference type="EMBL" id="CP002686">
    <property type="protein sequence ID" value="AEE79659.2"/>
    <property type="molecule type" value="Genomic_DNA"/>
</dbReference>
<dbReference type="PIR" id="T46183">
    <property type="entry name" value="T46183"/>
</dbReference>
<dbReference type="RefSeq" id="NP_001319782.1">
    <molecule id="F4J3D9-1"/>
    <property type="nucleotide sequence ID" value="NM_001339871.1"/>
</dbReference>
<dbReference type="RefSeq" id="NP_567049.3">
    <property type="nucleotide sequence ID" value="NM_115607.4"/>
</dbReference>
<dbReference type="SMR" id="F4J3D9"/>
<dbReference type="FunCoup" id="F4J3D9">
    <property type="interactions" value="2949"/>
</dbReference>
<dbReference type="STRING" id="3702.F4J3D9"/>
<dbReference type="MEROPS" id="M16.A01"/>
<dbReference type="GlyGen" id="F4J3D9">
    <property type="glycosylation" value="1 site"/>
</dbReference>
<dbReference type="iPTMnet" id="F4J3D9"/>
<dbReference type="PaxDb" id="3702-AT3G57470.2"/>
<dbReference type="ProteomicsDB" id="228792">
    <molecule id="F4J3D9-1"/>
</dbReference>
<dbReference type="EnsemblPlants" id="AT3G57470.2">
    <molecule id="F4J3D9-1"/>
    <property type="protein sequence ID" value="AT3G57470.2"/>
    <property type="gene ID" value="AT3G57470"/>
</dbReference>
<dbReference type="GeneID" id="824914"/>
<dbReference type="Gramene" id="AT3G57470.2">
    <molecule id="F4J3D9-1"/>
    <property type="protein sequence ID" value="AT3G57470.2"/>
    <property type="gene ID" value="AT3G57470"/>
</dbReference>
<dbReference type="KEGG" id="ath:AT3G57470"/>
<dbReference type="Araport" id="AT3G57470"/>
<dbReference type="TAIR" id="AT3G57470"/>
<dbReference type="eggNOG" id="KOG0959">
    <property type="taxonomic scope" value="Eukaryota"/>
</dbReference>
<dbReference type="HOGENOM" id="CLU_004639_1_1_1"/>
<dbReference type="InParanoid" id="F4J3D9"/>
<dbReference type="OMA" id="LQSDCWR"/>
<dbReference type="PRO" id="PR:F4J3D9"/>
<dbReference type="Proteomes" id="UP000006548">
    <property type="component" value="Chromosome 3"/>
</dbReference>
<dbReference type="ExpressionAtlas" id="F4J3D9">
    <property type="expression patterns" value="baseline and differential"/>
</dbReference>
<dbReference type="GO" id="GO:0005737">
    <property type="term" value="C:cytoplasm"/>
    <property type="evidence" value="ECO:0007669"/>
    <property type="project" value="UniProtKB-ARBA"/>
</dbReference>
<dbReference type="GO" id="GO:0046872">
    <property type="term" value="F:metal ion binding"/>
    <property type="evidence" value="ECO:0007669"/>
    <property type="project" value="UniProtKB-KW"/>
</dbReference>
<dbReference type="GO" id="GO:0004222">
    <property type="term" value="F:metalloendopeptidase activity"/>
    <property type="evidence" value="ECO:0007669"/>
    <property type="project" value="InterPro"/>
</dbReference>
<dbReference type="GO" id="GO:0006508">
    <property type="term" value="P:proteolysis"/>
    <property type="evidence" value="ECO:0007669"/>
    <property type="project" value="UniProtKB-KW"/>
</dbReference>
<dbReference type="FunFam" id="3.30.830.10:FF:000003">
    <property type="entry name" value="Insulin-degrading enzyme"/>
    <property type="match status" value="1"/>
</dbReference>
<dbReference type="FunFam" id="3.30.830.10:FF:000028">
    <property type="entry name" value="Insulin-degrading enzyme-like 1 peroxisomal"/>
    <property type="match status" value="1"/>
</dbReference>
<dbReference type="FunFam" id="3.30.830.10:FF:000005">
    <property type="entry name" value="nardilysin isoform X1"/>
    <property type="match status" value="1"/>
</dbReference>
<dbReference type="FunFam" id="3.30.830.10:FF:000004">
    <property type="entry name" value="Putative insulin-degrading enzyme"/>
    <property type="match status" value="1"/>
</dbReference>
<dbReference type="Gene3D" id="3.30.830.10">
    <property type="entry name" value="Metalloenzyme, LuxS/M16 peptidase-like"/>
    <property type="match status" value="4"/>
</dbReference>
<dbReference type="InterPro" id="IPR011249">
    <property type="entry name" value="Metalloenz_LuxS/M16"/>
</dbReference>
<dbReference type="InterPro" id="IPR011765">
    <property type="entry name" value="Pept_M16_N"/>
</dbReference>
<dbReference type="InterPro" id="IPR001431">
    <property type="entry name" value="Pept_M16_Zn_BS"/>
</dbReference>
<dbReference type="InterPro" id="IPR050626">
    <property type="entry name" value="Peptidase_M16"/>
</dbReference>
<dbReference type="InterPro" id="IPR007863">
    <property type="entry name" value="Peptidase_M16_C"/>
</dbReference>
<dbReference type="InterPro" id="IPR032632">
    <property type="entry name" value="Peptidase_M16_M"/>
</dbReference>
<dbReference type="InterPro" id="IPR054734">
    <property type="entry name" value="PqqF-like_C_4"/>
</dbReference>
<dbReference type="PANTHER" id="PTHR43690:SF23">
    <property type="entry name" value="INSULIN-DEGRADING ENZYME-LIKE 2"/>
    <property type="match status" value="1"/>
</dbReference>
<dbReference type="PANTHER" id="PTHR43690">
    <property type="entry name" value="NARDILYSIN"/>
    <property type="match status" value="1"/>
</dbReference>
<dbReference type="Pfam" id="PF00675">
    <property type="entry name" value="Peptidase_M16"/>
    <property type="match status" value="1"/>
</dbReference>
<dbReference type="Pfam" id="PF05193">
    <property type="entry name" value="Peptidase_M16_C"/>
    <property type="match status" value="1"/>
</dbReference>
<dbReference type="Pfam" id="PF16187">
    <property type="entry name" value="Peptidase_M16_M"/>
    <property type="match status" value="1"/>
</dbReference>
<dbReference type="Pfam" id="PF22456">
    <property type="entry name" value="PqqF-like_C_4"/>
    <property type="match status" value="1"/>
</dbReference>
<dbReference type="SUPFAM" id="SSF63411">
    <property type="entry name" value="LuxS/MPP-like metallohydrolase"/>
    <property type="match status" value="4"/>
</dbReference>
<dbReference type="PROSITE" id="PS00143">
    <property type="entry name" value="INSULINASE"/>
    <property type="match status" value="1"/>
</dbReference>
<proteinExistence type="inferred from homology"/>
<organism>
    <name type="scientific">Arabidopsis thaliana</name>
    <name type="common">Mouse-ear cress</name>
    <dbReference type="NCBI Taxonomy" id="3702"/>
    <lineage>
        <taxon>Eukaryota</taxon>
        <taxon>Viridiplantae</taxon>
        <taxon>Streptophyta</taxon>
        <taxon>Embryophyta</taxon>
        <taxon>Tracheophyta</taxon>
        <taxon>Spermatophyta</taxon>
        <taxon>Magnoliopsida</taxon>
        <taxon>eudicotyledons</taxon>
        <taxon>Gunneridae</taxon>
        <taxon>Pentapetalae</taxon>
        <taxon>rosids</taxon>
        <taxon>malvids</taxon>
        <taxon>Brassicales</taxon>
        <taxon>Brassicaceae</taxon>
        <taxon>Camelineae</taxon>
        <taxon>Arabidopsis</taxon>
    </lineage>
</organism>
<reference key="1">
    <citation type="journal article" date="2000" name="Nature">
        <title>Sequence and analysis of chromosome 3 of the plant Arabidopsis thaliana.</title>
        <authorList>
            <person name="Salanoubat M."/>
            <person name="Lemcke K."/>
            <person name="Rieger M."/>
            <person name="Ansorge W."/>
            <person name="Unseld M."/>
            <person name="Fartmann B."/>
            <person name="Valle G."/>
            <person name="Bloecker H."/>
            <person name="Perez-Alonso M."/>
            <person name="Obermaier B."/>
            <person name="Delseny M."/>
            <person name="Boutry M."/>
            <person name="Grivell L.A."/>
            <person name="Mache R."/>
            <person name="Puigdomenech P."/>
            <person name="De Simone V."/>
            <person name="Choisne N."/>
            <person name="Artiguenave F."/>
            <person name="Robert C."/>
            <person name="Brottier P."/>
            <person name="Wincker P."/>
            <person name="Cattolico L."/>
            <person name="Weissenbach J."/>
            <person name="Saurin W."/>
            <person name="Quetier F."/>
            <person name="Schaefer M."/>
            <person name="Mueller-Auer S."/>
            <person name="Gabel C."/>
            <person name="Fuchs M."/>
            <person name="Benes V."/>
            <person name="Wurmbach E."/>
            <person name="Drzonek H."/>
            <person name="Erfle H."/>
            <person name="Jordan N."/>
            <person name="Bangert S."/>
            <person name="Wiedelmann R."/>
            <person name="Kranz H."/>
            <person name="Voss H."/>
            <person name="Holland R."/>
            <person name="Brandt P."/>
            <person name="Nyakatura G."/>
            <person name="Vezzi A."/>
            <person name="D'Angelo M."/>
            <person name="Pallavicini A."/>
            <person name="Toppo S."/>
            <person name="Simionati B."/>
            <person name="Conrad A."/>
            <person name="Hornischer K."/>
            <person name="Kauer G."/>
            <person name="Loehnert T.-H."/>
            <person name="Nordsiek G."/>
            <person name="Reichelt J."/>
            <person name="Scharfe M."/>
            <person name="Schoen O."/>
            <person name="Bargues M."/>
            <person name="Terol J."/>
            <person name="Climent J."/>
            <person name="Navarro P."/>
            <person name="Collado C."/>
            <person name="Perez-Perez A."/>
            <person name="Ottenwaelder B."/>
            <person name="Duchemin D."/>
            <person name="Cooke R."/>
            <person name="Laudie M."/>
            <person name="Berger-Llauro C."/>
            <person name="Purnelle B."/>
            <person name="Masuy D."/>
            <person name="de Haan M."/>
            <person name="Maarse A.C."/>
            <person name="Alcaraz J.-P."/>
            <person name="Cottet A."/>
            <person name="Casacuberta E."/>
            <person name="Monfort A."/>
            <person name="Argiriou A."/>
            <person name="Flores M."/>
            <person name="Liguori R."/>
            <person name="Vitale D."/>
            <person name="Mannhaupt G."/>
            <person name="Haase D."/>
            <person name="Schoof H."/>
            <person name="Rudd S."/>
            <person name="Zaccaria P."/>
            <person name="Mewes H.-W."/>
            <person name="Mayer K.F.X."/>
            <person name="Kaul S."/>
            <person name="Town C.D."/>
            <person name="Koo H.L."/>
            <person name="Tallon L.J."/>
            <person name="Jenkins J."/>
            <person name="Rooney T."/>
            <person name="Rizzo M."/>
            <person name="Walts A."/>
            <person name="Utterback T."/>
            <person name="Fujii C.Y."/>
            <person name="Shea T.P."/>
            <person name="Creasy T.H."/>
            <person name="Haas B."/>
            <person name="Maiti R."/>
            <person name="Wu D."/>
            <person name="Peterson J."/>
            <person name="Van Aken S."/>
            <person name="Pai G."/>
            <person name="Militscher J."/>
            <person name="Sellers P."/>
            <person name="Gill J.E."/>
            <person name="Feldblyum T.V."/>
            <person name="Preuss D."/>
            <person name="Lin X."/>
            <person name="Nierman W.C."/>
            <person name="Salzberg S.L."/>
            <person name="White O."/>
            <person name="Venter J.C."/>
            <person name="Fraser C.M."/>
            <person name="Kaneko T."/>
            <person name="Nakamura Y."/>
            <person name="Sato S."/>
            <person name="Kato T."/>
            <person name="Asamizu E."/>
            <person name="Sasamoto S."/>
            <person name="Kimura T."/>
            <person name="Idesawa K."/>
            <person name="Kawashima K."/>
            <person name="Kishida Y."/>
            <person name="Kiyokawa C."/>
            <person name="Kohara M."/>
            <person name="Matsumoto M."/>
            <person name="Matsuno A."/>
            <person name="Muraki A."/>
            <person name="Nakayama S."/>
            <person name="Nakazaki N."/>
            <person name="Shinpo S."/>
            <person name="Takeuchi C."/>
            <person name="Wada T."/>
            <person name="Watanabe A."/>
            <person name="Yamada M."/>
            <person name="Yasuda M."/>
            <person name="Tabata S."/>
        </authorList>
    </citation>
    <scope>NUCLEOTIDE SEQUENCE [LARGE SCALE GENOMIC DNA]</scope>
    <source>
        <strain>cv. Columbia</strain>
    </source>
</reference>
<reference key="2">
    <citation type="journal article" date="2017" name="Plant J.">
        <title>Araport11: a complete reannotation of the Arabidopsis thaliana reference genome.</title>
        <authorList>
            <person name="Cheng C.Y."/>
            <person name="Krishnakumar V."/>
            <person name="Chan A.P."/>
            <person name="Thibaud-Nissen F."/>
            <person name="Schobel S."/>
            <person name="Town C.D."/>
        </authorList>
    </citation>
    <scope>GENOME REANNOTATION</scope>
    <source>
        <strain>cv. Columbia</strain>
    </source>
</reference>
<comment type="cofactor">
    <cofactor evidence="1">
        <name>Zn(2+)</name>
        <dbReference type="ChEBI" id="CHEBI:29105"/>
    </cofactor>
    <text evidence="1">Binds 1 zinc ion per subunit.</text>
</comment>
<comment type="alternative products">
    <event type="alternative splicing"/>
    <isoform>
        <id>F4J3D9-1</id>
        <name>1</name>
        <sequence type="displayed"/>
    </isoform>
    <text>A number of isoforms are produced. According to EST sequences.</text>
</comment>
<comment type="similarity">
    <text evidence="3">Belongs to the peptidase M16 family.</text>
</comment>
<comment type="sequence caution" evidence="3">
    <conflict type="erroneous gene model prediction">
        <sequence resource="EMBL-CDS" id="AEE79658"/>
    </conflict>
</comment>
<comment type="sequence caution" evidence="3">
    <conflict type="erroneous gene model prediction">
        <sequence resource="EMBL-CDS" id="CAB66104"/>
    </conflict>
</comment>
<name>IDE2_ARATH</name>